<sequence length="173" mass="20356">MKFYYHDNDSSVDQCAPHDSGEPVTAEQLEKIGVLAFHYPDVEDVNRLAKERKYTNRDEVTITPEAMGGQENYEKKLKVFYEEHLHEDEEIRYILDGEGYFDVRDKDDRWIRAQLNAGDLLILPSGIYHRFTLSEKNYVHTMRLFQAEPKWVALPRPVDNNPYRQEYVKAISA</sequence>
<gene>
    <name evidence="1" type="primary">ADI1</name>
    <name type="ordered locus">YALI0A14498g</name>
</gene>
<feature type="chain" id="PRO_0000414368" description="Acireductone dioxygenase">
    <location>
        <begin position="1"/>
        <end position="173"/>
    </location>
</feature>
<feature type="region of interest" description="Disordered" evidence="2">
    <location>
        <begin position="1"/>
        <end position="21"/>
    </location>
</feature>
<feature type="binding site" evidence="1">
    <location>
        <position position="84"/>
    </location>
    <ligand>
        <name>Fe(2+)</name>
        <dbReference type="ChEBI" id="CHEBI:29033"/>
        <note>for iron-dependent acireductone dioxygenase activity</note>
    </ligand>
</feature>
<feature type="binding site" evidence="1">
    <location>
        <position position="84"/>
    </location>
    <ligand>
        <name>Ni(2+)</name>
        <dbReference type="ChEBI" id="CHEBI:49786"/>
        <note>for nickel-dependent acireductone dioxygenase activity</note>
    </ligand>
</feature>
<feature type="binding site" evidence="1">
    <location>
        <position position="86"/>
    </location>
    <ligand>
        <name>Fe(2+)</name>
        <dbReference type="ChEBI" id="CHEBI:29033"/>
        <note>for iron-dependent acireductone dioxygenase activity</note>
    </ligand>
</feature>
<feature type="binding site" evidence="1">
    <location>
        <position position="86"/>
    </location>
    <ligand>
        <name>Ni(2+)</name>
        <dbReference type="ChEBI" id="CHEBI:49786"/>
        <note>for nickel-dependent acireductone dioxygenase activity</note>
    </ligand>
</feature>
<feature type="binding site" evidence="1">
    <location>
        <position position="90"/>
    </location>
    <ligand>
        <name>Fe(2+)</name>
        <dbReference type="ChEBI" id="CHEBI:29033"/>
        <note>for iron-dependent acireductone dioxygenase activity</note>
    </ligand>
</feature>
<feature type="binding site" evidence="1">
    <location>
        <position position="90"/>
    </location>
    <ligand>
        <name>Ni(2+)</name>
        <dbReference type="ChEBI" id="CHEBI:49786"/>
        <note>for nickel-dependent acireductone dioxygenase activity</note>
    </ligand>
</feature>
<feature type="binding site" evidence="1">
    <location>
        <position position="129"/>
    </location>
    <ligand>
        <name>Fe(2+)</name>
        <dbReference type="ChEBI" id="CHEBI:29033"/>
        <note>for iron-dependent acireductone dioxygenase activity</note>
    </ligand>
</feature>
<feature type="binding site" evidence="1">
    <location>
        <position position="129"/>
    </location>
    <ligand>
        <name>Ni(2+)</name>
        <dbReference type="ChEBI" id="CHEBI:49786"/>
        <note>for nickel-dependent acireductone dioxygenase activity</note>
    </ligand>
</feature>
<reference key="1">
    <citation type="journal article" date="2004" name="Nature">
        <title>Genome evolution in yeasts.</title>
        <authorList>
            <person name="Dujon B."/>
            <person name="Sherman D."/>
            <person name="Fischer G."/>
            <person name="Durrens P."/>
            <person name="Casaregola S."/>
            <person name="Lafontaine I."/>
            <person name="de Montigny J."/>
            <person name="Marck C."/>
            <person name="Neuveglise C."/>
            <person name="Talla E."/>
            <person name="Goffard N."/>
            <person name="Frangeul L."/>
            <person name="Aigle M."/>
            <person name="Anthouard V."/>
            <person name="Babour A."/>
            <person name="Barbe V."/>
            <person name="Barnay S."/>
            <person name="Blanchin S."/>
            <person name="Beckerich J.-M."/>
            <person name="Beyne E."/>
            <person name="Bleykasten C."/>
            <person name="Boisrame A."/>
            <person name="Boyer J."/>
            <person name="Cattolico L."/>
            <person name="Confanioleri F."/>
            <person name="de Daruvar A."/>
            <person name="Despons L."/>
            <person name="Fabre E."/>
            <person name="Fairhead C."/>
            <person name="Ferry-Dumazet H."/>
            <person name="Groppi A."/>
            <person name="Hantraye F."/>
            <person name="Hennequin C."/>
            <person name="Jauniaux N."/>
            <person name="Joyet P."/>
            <person name="Kachouri R."/>
            <person name="Kerrest A."/>
            <person name="Koszul R."/>
            <person name="Lemaire M."/>
            <person name="Lesur I."/>
            <person name="Ma L."/>
            <person name="Muller H."/>
            <person name="Nicaud J.-M."/>
            <person name="Nikolski M."/>
            <person name="Oztas S."/>
            <person name="Ozier-Kalogeropoulos O."/>
            <person name="Pellenz S."/>
            <person name="Potier S."/>
            <person name="Richard G.-F."/>
            <person name="Straub M.-L."/>
            <person name="Suleau A."/>
            <person name="Swennen D."/>
            <person name="Tekaia F."/>
            <person name="Wesolowski-Louvel M."/>
            <person name="Westhof E."/>
            <person name="Wirth B."/>
            <person name="Zeniou-Meyer M."/>
            <person name="Zivanovic Y."/>
            <person name="Bolotin-Fukuhara M."/>
            <person name="Thierry A."/>
            <person name="Bouchier C."/>
            <person name="Caudron B."/>
            <person name="Scarpelli C."/>
            <person name="Gaillardin C."/>
            <person name="Weissenbach J."/>
            <person name="Wincker P."/>
            <person name="Souciet J.-L."/>
        </authorList>
    </citation>
    <scope>NUCLEOTIDE SEQUENCE [LARGE SCALE GENOMIC DNA]</scope>
    <source>
        <strain>CLIB 122 / E 150</strain>
    </source>
</reference>
<dbReference type="EC" id="1.13.11.54" evidence="1"/>
<dbReference type="EC" id="1.13.11.53" evidence="1"/>
<dbReference type="EMBL" id="CR382127">
    <property type="protein sequence ID" value="CAG83988.1"/>
    <property type="molecule type" value="Genomic_DNA"/>
</dbReference>
<dbReference type="RefSeq" id="XP_500059.1">
    <property type="nucleotide sequence ID" value="XM_500059.1"/>
</dbReference>
<dbReference type="SMR" id="Q6CH03"/>
<dbReference type="FunCoup" id="Q6CH03">
    <property type="interactions" value="280"/>
</dbReference>
<dbReference type="STRING" id="284591.Q6CH03"/>
<dbReference type="EnsemblFungi" id="CAG83988">
    <property type="protein sequence ID" value="CAG83988"/>
    <property type="gene ID" value="YALI0_A14498g"/>
</dbReference>
<dbReference type="KEGG" id="yli:2906238"/>
<dbReference type="VEuPathDB" id="FungiDB:YALI0_A14498g"/>
<dbReference type="HOGENOM" id="CLU_090154_0_1_1"/>
<dbReference type="InParanoid" id="Q6CH03"/>
<dbReference type="OMA" id="WYMDESQ"/>
<dbReference type="OrthoDB" id="76774at4891"/>
<dbReference type="UniPathway" id="UPA00904">
    <property type="reaction ID" value="UER00878"/>
</dbReference>
<dbReference type="Proteomes" id="UP000001300">
    <property type="component" value="Chromosome A"/>
</dbReference>
<dbReference type="GO" id="GO:0005737">
    <property type="term" value="C:cytoplasm"/>
    <property type="evidence" value="ECO:0007669"/>
    <property type="project" value="UniProtKB-SubCell"/>
</dbReference>
<dbReference type="GO" id="GO:0005634">
    <property type="term" value="C:nucleus"/>
    <property type="evidence" value="ECO:0007669"/>
    <property type="project" value="UniProtKB-SubCell"/>
</dbReference>
<dbReference type="GO" id="GO:0010308">
    <property type="term" value="F:acireductone dioxygenase (Ni2+-requiring) activity"/>
    <property type="evidence" value="ECO:0007669"/>
    <property type="project" value="UniProtKB-UniRule"/>
</dbReference>
<dbReference type="GO" id="GO:0010309">
    <property type="term" value="F:acireductone dioxygenase [iron(II)-requiring] activity"/>
    <property type="evidence" value="ECO:0000318"/>
    <property type="project" value="GO_Central"/>
</dbReference>
<dbReference type="GO" id="GO:0005506">
    <property type="term" value="F:iron ion binding"/>
    <property type="evidence" value="ECO:0007669"/>
    <property type="project" value="UniProtKB-UniRule"/>
</dbReference>
<dbReference type="GO" id="GO:0016151">
    <property type="term" value="F:nickel cation binding"/>
    <property type="evidence" value="ECO:0007669"/>
    <property type="project" value="UniProtKB-UniRule"/>
</dbReference>
<dbReference type="GO" id="GO:0019509">
    <property type="term" value="P:L-methionine salvage from methylthioadenosine"/>
    <property type="evidence" value="ECO:0007669"/>
    <property type="project" value="UniProtKB-UniRule"/>
</dbReference>
<dbReference type="GO" id="GO:0006555">
    <property type="term" value="P:methionine metabolic process"/>
    <property type="evidence" value="ECO:0000318"/>
    <property type="project" value="GO_Central"/>
</dbReference>
<dbReference type="CDD" id="cd02232">
    <property type="entry name" value="cupin_ARD"/>
    <property type="match status" value="1"/>
</dbReference>
<dbReference type="FunFam" id="2.60.120.10:FF:000079">
    <property type="entry name" value="1,2-dihydroxy-3-keto-5-methylthiopentene dioxygenase"/>
    <property type="match status" value="1"/>
</dbReference>
<dbReference type="Gene3D" id="2.60.120.10">
    <property type="entry name" value="Jelly Rolls"/>
    <property type="match status" value="1"/>
</dbReference>
<dbReference type="HAMAP" id="MF_03154">
    <property type="entry name" value="Salvage_MtnD_euk"/>
    <property type="match status" value="1"/>
</dbReference>
<dbReference type="InterPro" id="IPR004313">
    <property type="entry name" value="ARD"/>
</dbReference>
<dbReference type="InterPro" id="IPR027496">
    <property type="entry name" value="ARD_euk"/>
</dbReference>
<dbReference type="InterPro" id="IPR014710">
    <property type="entry name" value="RmlC-like_jellyroll"/>
</dbReference>
<dbReference type="InterPro" id="IPR011051">
    <property type="entry name" value="RmlC_Cupin_sf"/>
</dbReference>
<dbReference type="PANTHER" id="PTHR23418">
    <property type="entry name" value="ACIREDUCTONE DIOXYGENASE"/>
    <property type="match status" value="1"/>
</dbReference>
<dbReference type="PANTHER" id="PTHR23418:SF0">
    <property type="entry name" value="ACIREDUCTONE DIOXYGENASE"/>
    <property type="match status" value="1"/>
</dbReference>
<dbReference type="Pfam" id="PF03079">
    <property type="entry name" value="ARD"/>
    <property type="match status" value="1"/>
</dbReference>
<dbReference type="SUPFAM" id="SSF51182">
    <property type="entry name" value="RmlC-like cupins"/>
    <property type="match status" value="1"/>
</dbReference>
<evidence type="ECO:0000255" key="1">
    <source>
        <dbReference type="HAMAP-Rule" id="MF_03154"/>
    </source>
</evidence>
<evidence type="ECO:0000256" key="2">
    <source>
        <dbReference type="SAM" id="MobiDB-lite"/>
    </source>
</evidence>
<protein>
    <recommendedName>
        <fullName evidence="1">Acireductone dioxygenase</fullName>
    </recommendedName>
    <alternativeName>
        <fullName evidence="1">Acireductone dioxygenase (Fe(2+)-requiring)</fullName>
        <shortName evidence="1">ARD'</shortName>
        <shortName evidence="1">Fe-ARD</shortName>
        <ecNumber evidence="1">1.13.11.54</ecNumber>
    </alternativeName>
    <alternativeName>
        <fullName evidence="1">Acireductone dioxygenase (Ni(2+)-requiring)</fullName>
        <shortName evidence="1">ARD</shortName>
        <shortName evidence="1">Ni-ARD</shortName>
        <ecNumber evidence="1">1.13.11.53</ecNumber>
    </alternativeName>
</protein>
<organism>
    <name type="scientific">Yarrowia lipolytica (strain CLIB 122 / E 150)</name>
    <name type="common">Yeast</name>
    <name type="synonym">Candida lipolytica</name>
    <dbReference type="NCBI Taxonomy" id="284591"/>
    <lineage>
        <taxon>Eukaryota</taxon>
        <taxon>Fungi</taxon>
        <taxon>Dikarya</taxon>
        <taxon>Ascomycota</taxon>
        <taxon>Saccharomycotina</taxon>
        <taxon>Dipodascomycetes</taxon>
        <taxon>Dipodascales</taxon>
        <taxon>Dipodascales incertae sedis</taxon>
        <taxon>Yarrowia</taxon>
    </lineage>
</organism>
<keyword id="KW-0028">Amino-acid biosynthesis</keyword>
<keyword id="KW-0963">Cytoplasm</keyword>
<keyword id="KW-0223">Dioxygenase</keyword>
<keyword id="KW-0408">Iron</keyword>
<keyword id="KW-0479">Metal-binding</keyword>
<keyword id="KW-0486">Methionine biosynthesis</keyword>
<keyword id="KW-0533">Nickel</keyword>
<keyword id="KW-0539">Nucleus</keyword>
<keyword id="KW-0560">Oxidoreductase</keyword>
<keyword id="KW-1185">Reference proteome</keyword>
<comment type="function">
    <text evidence="1">Catalyzes 2 different reactions between oxygen and the acireductone 1,2-dihydroxy-3-keto-5-methylthiopentene (DHK-MTPene) depending upon the metal bound in the active site. Fe-containing acireductone dioxygenase (Fe-ARD) produces formate and 2-keto-4-methylthiobutyrate (KMTB), the alpha-ketoacid precursor of methionine in the methionine recycle pathway. Ni-containing acireductone dioxygenase (Ni-ARD) produces methylthiopropionate, carbon monoxide and formate, and does not lie on the methionine recycle pathway.</text>
</comment>
<comment type="catalytic activity">
    <reaction evidence="1">
        <text>1,2-dihydroxy-5-(methylsulfanyl)pent-1-en-3-one + O2 = 4-methylsulfanyl-2-oxobutanoate + formate + 2 H(+)</text>
        <dbReference type="Rhea" id="RHEA:24504"/>
        <dbReference type="ChEBI" id="CHEBI:15378"/>
        <dbReference type="ChEBI" id="CHEBI:15379"/>
        <dbReference type="ChEBI" id="CHEBI:15740"/>
        <dbReference type="ChEBI" id="CHEBI:16723"/>
        <dbReference type="ChEBI" id="CHEBI:49252"/>
        <dbReference type="EC" id="1.13.11.54"/>
    </reaction>
</comment>
<comment type="catalytic activity">
    <reaction evidence="1">
        <text>1,2-dihydroxy-5-(methylsulfanyl)pent-1-en-3-one + O2 = 3-(methylsulfanyl)propanoate + CO + formate + 2 H(+)</text>
        <dbReference type="Rhea" id="RHEA:14161"/>
        <dbReference type="ChEBI" id="CHEBI:15378"/>
        <dbReference type="ChEBI" id="CHEBI:15379"/>
        <dbReference type="ChEBI" id="CHEBI:15740"/>
        <dbReference type="ChEBI" id="CHEBI:17245"/>
        <dbReference type="ChEBI" id="CHEBI:49016"/>
        <dbReference type="ChEBI" id="CHEBI:49252"/>
        <dbReference type="EC" id="1.13.11.53"/>
    </reaction>
</comment>
<comment type="cofactor">
    <cofactor evidence="1">
        <name>Fe(2+)</name>
        <dbReference type="ChEBI" id="CHEBI:29033"/>
    </cofactor>
    <cofactor evidence="1">
        <name>Ni(2+)</name>
        <dbReference type="ChEBI" id="CHEBI:49786"/>
    </cofactor>
    <text evidence="1">Binds either 1 Fe or Ni cation per monomer. Iron-binding promotes an acireductone dioxygenase reaction producing 2-keto-4-methylthiobutyrate, while nickel-binding promotes an acireductone dioxygenase reaction producing 3-(methylsulfanyl)propanoate.</text>
</comment>
<comment type="pathway">
    <text evidence="1">Amino-acid biosynthesis; L-methionine biosynthesis via salvage pathway; L-methionine from S-methyl-5-thio-alpha-D-ribose 1-phosphate: step 5/6.</text>
</comment>
<comment type="subcellular location">
    <subcellularLocation>
        <location evidence="1">Cytoplasm</location>
    </subcellularLocation>
    <subcellularLocation>
        <location evidence="1">Nucleus</location>
    </subcellularLocation>
</comment>
<comment type="similarity">
    <text evidence="1">Belongs to the acireductone dioxygenase (ARD) family.</text>
</comment>
<proteinExistence type="inferred from homology"/>
<name>MTND_YARLI</name>
<accession>Q6CH03</accession>